<accession>Q489A4</accession>
<protein>
    <recommendedName>
        <fullName evidence="1">D-aminoacyl-tRNA deacylase</fullName>
        <shortName evidence="1">DTD</shortName>
        <ecNumber evidence="1">3.1.1.96</ecNumber>
    </recommendedName>
    <alternativeName>
        <fullName evidence="1">Gly-tRNA(Ala) deacylase</fullName>
    </alternativeName>
</protein>
<sequence length="145" mass="15969">MIALIQRVSQASVTVNGEIIGEIEKGLLVFLAIEPLDNEQKAKRLAERVAGYRVFNDENDKMNLNVKQAEGNILVVSQFTLAADTSSGMRPSFTTAAKPEFSNHLYQFFVTQLRDKGFDVPTGEFAADMKVALINDGPVTFTLTI</sequence>
<gene>
    <name evidence="1" type="primary">dtd</name>
    <name type="ordered locus">CPS_0610</name>
</gene>
<feature type="chain" id="PRO_0000259274" description="D-aminoacyl-tRNA deacylase">
    <location>
        <begin position="1"/>
        <end position="145"/>
    </location>
</feature>
<feature type="short sequence motif" description="Gly-cisPro motif, important for rejection of L-amino acids" evidence="1">
    <location>
        <begin position="137"/>
        <end position="138"/>
    </location>
</feature>
<reference key="1">
    <citation type="journal article" date="2005" name="Proc. Natl. Acad. Sci. U.S.A.">
        <title>The psychrophilic lifestyle as revealed by the genome sequence of Colwellia psychrerythraea 34H through genomic and proteomic analyses.</title>
        <authorList>
            <person name="Methe B.A."/>
            <person name="Nelson K.E."/>
            <person name="Deming J.W."/>
            <person name="Momen B."/>
            <person name="Melamud E."/>
            <person name="Zhang X."/>
            <person name="Moult J."/>
            <person name="Madupu R."/>
            <person name="Nelson W.C."/>
            <person name="Dodson R.J."/>
            <person name="Brinkac L.M."/>
            <person name="Daugherty S.C."/>
            <person name="Durkin A.S."/>
            <person name="DeBoy R.T."/>
            <person name="Kolonay J.F."/>
            <person name="Sullivan S.A."/>
            <person name="Zhou L."/>
            <person name="Davidsen T.M."/>
            <person name="Wu M."/>
            <person name="Huston A.L."/>
            <person name="Lewis M."/>
            <person name="Weaver B."/>
            <person name="Weidman J.F."/>
            <person name="Khouri H."/>
            <person name="Utterback T.R."/>
            <person name="Feldblyum T.V."/>
            <person name="Fraser C.M."/>
        </authorList>
    </citation>
    <scope>NUCLEOTIDE SEQUENCE [LARGE SCALE GENOMIC DNA]</scope>
    <source>
        <strain>34H / ATCC BAA-681</strain>
    </source>
</reference>
<keyword id="KW-0963">Cytoplasm</keyword>
<keyword id="KW-0378">Hydrolase</keyword>
<keyword id="KW-0694">RNA-binding</keyword>
<keyword id="KW-0820">tRNA-binding</keyword>
<name>DTD_COLP3</name>
<evidence type="ECO:0000255" key="1">
    <source>
        <dbReference type="HAMAP-Rule" id="MF_00518"/>
    </source>
</evidence>
<dbReference type="EC" id="3.1.1.96" evidence="1"/>
<dbReference type="EMBL" id="CP000083">
    <property type="protein sequence ID" value="AAZ28346.1"/>
    <property type="molecule type" value="Genomic_DNA"/>
</dbReference>
<dbReference type="RefSeq" id="WP_011041460.1">
    <property type="nucleotide sequence ID" value="NC_003910.7"/>
</dbReference>
<dbReference type="SMR" id="Q489A4"/>
<dbReference type="STRING" id="167879.CPS_0610"/>
<dbReference type="KEGG" id="cps:CPS_0610"/>
<dbReference type="eggNOG" id="COG1490">
    <property type="taxonomic scope" value="Bacteria"/>
</dbReference>
<dbReference type="HOGENOM" id="CLU_076901_1_1_6"/>
<dbReference type="Proteomes" id="UP000000547">
    <property type="component" value="Chromosome"/>
</dbReference>
<dbReference type="GO" id="GO:0005737">
    <property type="term" value="C:cytoplasm"/>
    <property type="evidence" value="ECO:0007669"/>
    <property type="project" value="UniProtKB-SubCell"/>
</dbReference>
<dbReference type="GO" id="GO:0051500">
    <property type="term" value="F:D-tyrosyl-tRNA(Tyr) deacylase activity"/>
    <property type="evidence" value="ECO:0007669"/>
    <property type="project" value="TreeGrafter"/>
</dbReference>
<dbReference type="GO" id="GO:0106026">
    <property type="term" value="F:Gly-tRNA(Ala) deacylase activity"/>
    <property type="evidence" value="ECO:0007669"/>
    <property type="project" value="UniProtKB-UniRule"/>
</dbReference>
<dbReference type="GO" id="GO:0043908">
    <property type="term" value="F:Ser(Gly)-tRNA(Ala) hydrolase activity"/>
    <property type="evidence" value="ECO:0007669"/>
    <property type="project" value="UniProtKB-UniRule"/>
</dbReference>
<dbReference type="GO" id="GO:0000049">
    <property type="term" value="F:tRNA binding"/>
    <property type="evidence" value="ECO:0007669"/>
    <property type="project" value="UniProtKB-UniRule"/>
</dbReference>
<dbReference type="GO" id="GO:0019478">
    <property type="term" value="P:D-amino acid catabolic process"/>
    <property type="evidence" value="ECO:0007669"/>
    <property type="project" value="UniProtKB-UniRule"/>
</dbReference>
<dbReference type="FunFam" id="3.50.80.10:FF:000001">
    <property type="entry name" value="D-aminoacyl-tRNA deacylase"/>
    <property type="match status" value="1"/>
</dbReference>
<dbReference type="Gene3D" id="3.50.80.10">
    <property type="entry name" value="D-tyrosyl-tRNA(Tyr) deacylase"/>
    <property type="match status" value="1"/>
</dbReference>
<dbReference type="HAMAP" id="MF_00518">
    <property type="entry name" value="Deacylase_Dtd"/>
    <property type="match status" value="1"/>
</dbReference>
<dbReference type="InterPro" id="IPR003732">
    <property type="entry name" value="Daa-tRNA_deacyls_DTD"/>
</dbReference>
<dbReference type="InterPro" id="IPR023509">
    <property type="entry name" value="DTD-like_sf"/>
</dbReference>
<dbReference type="NCBIfam" id="TIGR00256">
    <property type="entry name" value="D-aminoacyl-tRNA deacylase"/>
    <property type="match status" value="1"/>
</dbReference>
<dbReference type="PANTHER" id="PTHR10472:SF5">
    <property type="entry name" value="D-AMINOACYL-TRNA DEACYLASE 1"/>
    <property type="match status" value="1"/>
</dbReference>
<dbReference type="PANTHER" id="PTHR10472">
    <property type="entry name" value="D-TYROSYL-TRNA TYR DEACYLASE"/>
    <property type="match status" value="1"/>
</dbReference>
<dbReference type="Pfam" id="PF02580">
    <property type="entry name" value="Tyr_Deacylase"/>
    <property type="match status" value="1"/>
</dbReference>
<dbReference type="SUPFAM" id="SSF69500">
    <property type="entry name" value="DTD-like"/>
    <property type="match status" value="1"/>
</dbReference>
<organism>
    <name type="scientific">Colwellia psychrerythraea (strain 34H / ATCC BAA-681)</name>
    <name type="common">Vibrio psychroerythus</name>
    <dbReference type="NCBI Taxonomy" id="167879"/>
    <lineage>
        <taxon>Bacteria</taxon>
        <taxon>Pseudomonadati</taxon>
        <taxon>Pseudomonadota</taxon>
        <taxon>Gammaproteobacteria</taxon>
        <taxon>Alteromonadales</taxon>
        <taxon>Colwelliaceae</taxon>
        <taxon>Colwellia</taxon>
    </lineage>
</organism>
<comment type="function">
    <text evidence="1">An aminoacyl-tRNA editing enzyme that deacylates mischarged D-aminoacyl-tRNAs. Also deacylates mischarged glycyl-tRNA(Ala), protecting cells against glycine mischarging by AlaRS. Acts via tRNA-based rather than protein-based catalysis; rejects L-amino acids rather than detecting D-amino acids in the active site. By recycling D-aminoacyl-tRNA to D-amino acids and free tRNA molecules, this enzyme counteracts the toxicity associated with the formation of D-aminoacyl-tRNA entities in vivo and helps enforce protein L-homochirality.</text>
</comment>
<comment type="catalytic activity">
    <reaction evidence="1">
        <text>glycyl-tRNA(Ala) + H2O = tRNA(Ala) + glycine + H(+)</text>
        <dbReference type="Rhea" id="RHEA:53744"/>
        <dbReference type="Rhea" id="RHEA-COMP:9657"/>
        <dbReference type="Rhea" id="RHEA-COMP:13640"/>
        <dbReference type="ChEBI" id="CHEBI:15377"/>
        <dbReference type="ChEBI" id="CHEBI:15378"/>
        <dbReference type="ChEBI" id="CHEBI:57305"/>
        <dbReference type="ChEBI" id="CHEBI:78442"/>
        <dbReference type="ChEBI" id="CHEBI:78522"/>
        <dbReference type="EC" id="3.1.1.96"/>
    </reaction>
</comment>
<comment type="catalytic activity">
    <reaction evidence="1">
        <text>a D-aminoacyl-tRNA + H2O = a tRNA + a D-alpha-amino acid + H(+)</text>
        <dbReference type="Rhea" id="RHEA:13953"/>
        <dbReference type="Rhea" id="RHEA-COMP:10123"/>
        <dbReference type="Rhea" id="RHEA-COMP:10124"/>
        <dbReference type="ChEBI" id="CHEBI:15377"/>
        <dbReference type="ChEBI" id="CHEBI:15378"/>
        <dbReference type="ChEBI" id="CHEBI:59871"/>
        <dbReference type="ChEBI" id="CHEBI:78442"/>
        <dbReference type="ChEBI" id="CHEBI:79333"/>
        <dbReference type="EC" id="3.1.1.96"/>
    </reaction>
</comment>
<comment type="subunit">
    <text evidence="1">Homodimer.</text>
</comment>
<comment type="subcellular location">
    <subcellularLocation>
        <location evidence="1">Cytoplasm</location>
    </subcellularLocation>
</comment>
<comment type="domain">
    <text evidence="1">A Gly-cisPro motif from one monomer fits into the active site of the other monomer to allow specific chiral rejection of L-amino acids.</text>
</comment>
<comment type="similarity">
    <text evidence="1">Belongs to the DTD family.</text>
</comment>
<proteinExistence type="inferred from homology"/>